<name>SYFA_CLOP1</name>
<gene>
    <name evidence="1" type="primary">pheS</name>
    <name type="ordered locus">CPF_2140</name>
</gene>
<keyword id="KW-0030">Aminoacyl-tRNA synthetase</keyword>
<keyword id="KW-0067">ATP-binding</keyword>
<keyword id="KW-0963">Cytoplasm</keyword>
<keyword id="KW-0436">Ligase</keyword>
<keyword id="KW-0460">Magnesium</keyword>
<keyword id="KW-0479">Metal-binding</keyword>
<keyword id="KW-0547">Nucleotide-binding</keyword>
<keyword id="KW-0648">Protein biosynthesis</keyword>
<protein>
    <recommendedName>
        <fullName evidence="1">Phenylalanine--tRNA ligase alpha subunit</fullName>
        <ecNumber evidence="1">6.1.1.20</ecNumber>
    </recommendedName>
    <alternativeName>
        <fullName evidence="1">Phenylalanyl-tRNA synthetase alpha subunit</fullName>
        <shortName evidence="1">PheRS</shortName>
    </alternativeName>
</protein>
<feature type="chain" id="PRO_1000006818" description="Phenylalanine--tRNA ligase alpha subunit">
    <location>
        <begin position="1"/>
        <end position="339"/>
    </location>
</feature>
<feature type="binding site" evidence="1">
    <location>
        <position position="254"/>
    </location>
    <ligand>
        <name>Mg(2+)</name>
        <dbReference type="ChEBI" id="CHEBI:18420"/>
        <note>shared with beta subunit</note>
    </ligand>
</feature>
<organism>
    <name type="scientific">Clostridium perfringens (strain ATCC 13124 / DSM 756 / JCM 1290 / NCIMB 6125 / NCTC 8237 / Type A)</name>
    <dbReference type="NCBI Taxonomy" id="195103"/>
    <lineage>
        <taxon>Bacteria</taxon>
        <taxon>Bacillati</taxon>
        <taxon>Bacillota</taxon>
        <taxon>Clostridia</taxon>
        <taxon>Eubacteriales</taxon>
        <taxon>Clostridiaceae</taxon>
        <taxon>Clostridium</taxon>
    </lineage>
</organism>
<proteinExistence type="inferred from homology"/>
<accession>Q0TP72</accession>
<dbReference type="EC" id="6.1.1.20" evidence="1"/>
<dbReference type="EMBL" id="CP000246">
    <property type="protein sequence ID" value="ABG84391.1"/>
    <property type="molecule type" value="Genomic_DNA"/>
</dbReference>
<dbReference type="RefSeq" id="WP_003451091.1">
    <property type="nucleotide sequence ID" value="NC_008261.1"/>
</dbReference>
<dbReference type="SMR" id="Q0TP72"/>
<dbReference type="STRING" id="195103.CPF_2140"/>
<dbReference type="PaxDb" id="195103-CPF_2140"/>
<dbReference type="GeneID" id="93001579"/>
<dbReference type="KEGG" id="cpf:CPF_2140"/>
<dbReference type="eggNOG" id="COG0016">
    <property type="taxonomic scope" value="Bacteria"/>
</dbReference>
<dbReference type="HOGENOM" id="CLU_025086_0_1_9"/>
<dbReference type="Proteomes" id="UP000001823">
    <property type="component" value="Chromosome"/>
</dbReference>
<dbReference type="GO" id="GO:0005737">
    <property type="term" value="C:cytoplasm"/>
    <property type="evidence" value="ECO:0007669"/>
    <property type="project" value="UniProtKB-SubCell"/>
</dbReference>
<dbReference type="GO" id="GO:0005524">
    <property type="term" value="F:ATP binding"/>
    <property type="evidence" value="ECO:0007669"/>
    <property type="project" value="UniProtKB-UniRule"/>
</dbReference>
<dbReference type="GO" id="GO:0140096">
    <property type="term" value="F:catalytic activity, acting on a protein"/>
    <property type="evidence" value="ECO:0007669"/>
    <property type="project" value="UniProtKB-ARBA"/>
</dbReference>
<dbReference type="GO" id="GO:0000287">
    <property type="term" value="F:magnesium ion binding"/>
    <property type="evidence" value="ECO:0007669"/>
    <property type="project" value="UniProtKB-UniRule"/>
</dbReference>
<dbReference type="GO" id="GO:0004826">
    <property type="term" value="F:phenylalanine-tRNA ligase activity"/>
    <property type="evidence" value="ECO:0007669"/>
    <property type="project" value="UniProtKB-UniRule"/>
</dbReference>
<dbReference type="GO" id="GO:0016740">
    <property type="term" value="F:transferase activity"/>
    <property type="evidence" value="ECO:0007669"/>
    <property type="project" value="UniProtKB-ARBA"/>
</dbReference>
<dbReference type="GO" id="GO:0000049">
    <property type="term" value="F:tRNA binding"/>
    <property type="evidence" value="ECO:0007669"/>
    <property type="project" value="InterPro"/>
</dbReference>
<dbReference type="GO" id="GO:0006432">
    <property type="term" value="P:phenylalanyl-tRNA aminoacylation"/>
    <property type="evidence" value="ECO:0007669"/>
    <property type="project" value="UniProtKB-UniRule"/>
</dbReference>
<dbReference type="CDD" id="cd00496">
    <property type="entry name" value="PheRS_alpha_core"/>
    <property type="match status" value="1"/>
</dbReference>
<dbReference type="FunFam" id="3.30.930.10:FF:000003">
    <property type="entry name" value="Phenylalanine--tRNA ligase alpha subunit"/>
    <property type="match status" value="1"/>
</dbReference>
<dbReference type="Gene3D" id="3.30.930.10">
    <property type="entry name" value="Bira Bifunctional Protein, Domain 2"/>
    <property type="match status" value="1"/>
</dbReference>
<dbReference type="HAMAP" id="MF_00281">
    <property type="entry name" value="Phe_tRNA_synth_alpha1"/>
    <property type="match status" value="1"/>
</dbReference>
<dbReference type="InterPro" id="IPR006195">
    <property type="entry name" value="aa-tRNA-synth_II"/>
</dbReference>
<dbReference type="InterPro" id="IPR045864">
    <property type="entry name" value="aa-tRNA-synth_II/BPL/LPL"/>
</dbReference>
<dbReference type="InterPro" id="IPR004529">
    <property type="entry name" value="Phe-tRNA-synth_IIc_asu"/>
</dbReference>
<dbReference type="InterPro" id="IPR004188">
    <property type="entry name" value="Phe-tRNA_ligase_II_N"/>
</dbReference>
<dbReference type="InterPro" id="IPR022911">
    <property type="entry name" value="Phe_tRNA_ligase_alpha1_bac"/>
</dbReference>
<dbReference type="InterPro" id="IPR002319">
    <property type="entry name" value="Phenylalanyl-tRNA_Synthase"/>
</dbReference>
<dbReference type="InterPro" id="IPR010978">
    <property type="entry name" value="tRNA-bd_arm"/>
</dbReference>
<dbReference type="NCBIfam" id="TIGR00468">
    <property type="entry name" value="pheS"/>
    <property type="match status" value="1"/>
</dbReference>
<dbReference type="PANTHER" id="PTHR11538:SF41">
    <property type="entry name" value="PHENYLALANINE--TRNA LIGASE, MITOCHONDRIAL"/>
    <property type="match status" value="1"/>
</dbReference>
<dbReference type="PANTHER" id="PTHR11538">
    <property type="entry name" value="PHENYLALANYL-TRNA SYNTHETASE"/>
    <property type="match status" value="1"/>
</dbReference>
<dbReference type="Pfam" id="PF02912">
    <property type="entry name" value="Phe_tRNA-synt_N"/>
    <property type="match status" value="1"/>
</dbReference>
<dbReference type="Pfam" id="PF01409">
    <property type="entry name" value="tRNA-synt_2d"/>
    <property type="match status" value="1"/>
</dbReference>
<dbReference type="SUPFAM" id="SSF55681">
    <property type="entry name" value="Class II aaRS and biotin synthetases"/>
    <property type="match status" value="1"/>
</dbReference>
<dbReference type="SUPFAM" id="SSF46589">
    <property type="entry name" value="tRNA-binding arm"/>
    <property type="match status" value="1"/>
</dbReference>
<dbReference type="PROSITE" id="PS50862">
    <property type="entry name" value="AA_TRNA_LIGASE_II"/>
    <property type="match status" value="1"/>
</dbReference>
<comment type="catalytic activity">
    <reaction evidence="1">
        <text>tRNA(Phe) + L-phenylalanine + ATP = L-phenylalanyl-tRNA(Phe) + AMP + diphosphate + H(+)</text>
        <dbReference type="Rhea" id="RHEA:19413"/>
        <dbReference type="Rhea" id="RHEA-COMP:9668"/>
        <dbReference type="Rhea" id="RHEA-COMP:9699"/>
        <dbReference type="ChEBI" id="CHEBI:15378"/>
        <dbReference type="ChEBI" id="CHEBI:30616"/>
        <dbReference type="ChEBI" id="CHEBI:33019"/>
        <dbReference type="ChEBI" id="CHEBI:58095"/>
        <dbReference type="ChEBI" id="CHEBI:78442"/>
        <dbReference type="ChEBI" id="CHEBI:78531"/>
        <dbReference type="ChEBI" id="CHEBI:456215"/>
        <dbReference type="EC" id="6.1.1.20"/>
    </reaction>
</comment>
<comment type="cofactor">
    <cofactor evidence="1">
        <name>Mg(2+)</name>
        <dbReference type="ChEBI" id="CHEBI:18420"/>
    </cofactor>
    <text evidence="1">Binds 2 magnesium ions per tetramer.</text>
</comment>
<comment type="subunit">
    <text evidence="1">Tetramer of two alpha and two beta subunits.</text>
</comment>
<comment type="subcellular location">
    <subcellularLocation>
        <location evidence="1">Cytoplasm</location>
    </subcellularLocation>
</comment>
<comment type="similarity">
    <text evidence="1">Belongs to the class-II aminoacyl-tRNA synthetase family. Phe-tRNA synthetase alpha subunit type 1 subfamily.</text>
</comment>
<sequence>MQDKLNQIKELALVEIKEAKDSTTIDTIRVKYLGKKGELTTILRGMGSLSKEERPIVGKLANEVREVLEAELEAVTKAVKEAEKQEKLKNEVIDISMPGKKQTIGKKHPLEQTLDEMKKIFVSMGFAIEDGPEVEKDYYNFEALNIPKNHPARSEQDTFYINDNVVLRTQTSPVQARVMEKQQPPIKMISPGKVFRSDAVDATHSPIFYQMEGLVIDKDITFADLKGTLELFAKKMFGDKVKTKFRPHHFPFTEPSAEMDATCFVCNGKGCKVCKGEGWIEILGCGMVHPQVLRNCGIDPEVYSGFAFGFGVDRMVMLKYGIDDIRLLYESDMRFLNQF</sequence>
<evidence type="ECO:0000255" key="1">
    <source>
        <dbReference type="HAMAP-Rule" id="MF_00281"/>
    </source>
</evidence>
<reference key="1">
    <citation type="journal article" date="2006" name="Genome Res.">
        <title>Skewed genomic variability in strains of the toxigenic bacterial pathogen, Clostridium perfringens.</title>
        <authorList>
            <person name="Myers G.S.A."/>
            <person name="Rasko D.A."/>
            <person name="Cheung J.K."/>
            <person name="Ravel J."/>
            <person name="Seshadri R."/>
            <person name="DeBoy R.T."/>
            <person name="Ren Q."/>
            <person name="Varga J."/>
            <person name="Awad M.M."/>
            <person name="Brinkac L.M."/>
            <person name="Daugherty S.C."/>
            <person name="Haft D.H."/>
            <person name="Dodson R.J."/>
            <person name="Madupu R."/>
            <person name="Nelson W.C."/>
            <person name="Rosovitz M.J."/>
            <person name="Sullivan S.A."/>
            <person name="Khouri H."/>
            <person name="Dimitrov G.I."/>
            <person name="Watkins K.L."/>
            <person name="Mulligan S."/>
            <person name="Benton J."/>
            <person name="Radune D."/>
            <person name="Fisher D.J."/>
            <person name="Atkins H.S."/>
            <person name="Hiscox T."/>
            <person name="Jost B.H."/>
            <person name="Billington S.J."/>
            <person name="Songer J.G."/>
            <person name="McClane B.A."/>
            <person name="Titball R.W."/>
            <person name="Rood J.I."/>
            <person name="Melville S.B."/>
            <person name="Paulsen I.T."/>
        </authorList>
    </citation>
    <scope>NUCLEOTIDE SEQUENCE [LARGE SCALE GENOMIC DNA]</scope>
    <source>
        <strain>ATCC 13124 / DSM 756 / JCM 1290 / NCIMB 6125 / NCTC 8237 / S 107 / Type A</strain>
    </source>
</reference>